<comment type="function">
    <text evidence="2">Component of the ubiquinol-cytochrome c reductase complex (complex III or cytochrome b-c1 complex) that is part of the mitochondrial respiratory chain. The b-c1 complex mediates electron transfer from ubiquinol to cytochrome c. Contributes to the generation of a proton gradient across the mitochondrial membrane that is then used for ATP synthesis.</text>
</comment>
<comment type="cofactor">
    <cofactor evidence="2">
        <name>heme b</name>
        <dbReference type="ChEBI" id="CHEBI:60344"/>
    </cofactor>
    <text evidence="2">Binds 2 heme b groups non-covalently.</text>
</comment>
<comment type="subunit">
    <text evidence="2">The cytochrome bc1 complex contains 11 subunits: 3 respiratory subunits (MT-CYB, CYC1 and UQCRFS1), 2 core proteins (UQCRC1 and UQCRC2) and 6 low-molecular weight proteins (UQCRH/QCR6, UQCRB/QCR7, UQCRQ/QCR8, UQCR10/QCR9, UQCR11/QCR10 and a cleavage product of UQCRFS1). This cytochrome bc1 complex then forms a dimer.</text>
</comment>
<comment type="subcellular location">
    <subcellularLocation>
        <location evidence="2">Mitochondrion inner membrane</location>
        <topology evidence="2">Multi-pass membrane protein</topology>
    </subcellularLocation>
</comment>
<comment type="miscellaneous">
    <text evidence="1">Heme 1 (or BL or b562) is low-potential and absorbs at about 562 nm, and heme 2 (or BH or b566) is high-potential and absorbs at about 566 nm.</text>
</comment>
<comment type="similarity">
    <text evidence="3 4">Belongs to the cytochrome b family.</text>
</comment>
<comment type="caution">
    <text evidence="2">The full-length protein contains only eight transmembrane helices, not nine as predicted by bioinformatics tools.</text>
</comment>
<geneLocation type="mitochondrion"/>
<protein>
    <recommendedName>
        <fullName>Cytochrome b</fullName>
    </recommendedName>
    <alternativeName>
        <fullName>Complex III subunit 3</fullName>
    </alternativeName>
    <alternativeName>
        <fullName>Complex III subunit III</fullName>
    </alternativeName>
    <alternativeName>
        <fullName>Cytochrome b-c1 complex subunit 3</fullName>
    </alternativeName>
    <alternativeName>
        <fullName>Ubiquinol-cytochrome-c reductase complex cytochrome b subunit</fullName>
    </alternativeName>
</protein>
<feature type="chain" id="PRO_0000060879" description="Cytochrome b">
    <location>
        <begin position="1"/>
        <end position="380"/>
    </location>
</feature>
<feature type="transmembrane region" description="Helical" evidence="2">
    <location>
        <begin position="34"/>
        <end position="54"/>
    </location>
</feature>
<feature type="transmembrane region" description="Helical" evidence="2">
    <location>
        <begin position="78"/>
        <end position="99"/>
    </location>
</feature>
<feature type="transmembrane region" description="Helical" evidence="2">
    <location>
        <begin position="114"/>
        <end position="134"/>
    </location>
</feature>
<feature type="transmembrane region" description="Helical" evidence="2">
    <location>
        <begin position="179"/>
        <end position="199"/>
    </location>
</feature>
<feature type="transmembrane region" description="Helical" evidence="2">
    <location>
        <begin position="227"/>
        <end position="247"/>
    </location>
</feature>
<feature type="transmembrane region" description="Helical" evidence="2">
    <location>
        <begin position="289"/>
        <end position="309"/>
    </location>
</feature>
<feature type="transmembrane region" description="Helical" evidence="2">
    <location>
        <begin position="321"/>
        <end position="341"/>
    </location>
</feature>
<feature type="transmembrane region" description="Helical" evidence="2">
    <location>
        <begin position="348"/>
        <end position="368"/>
    </location>
</feature>
<feature type="binding site" description="axial binding residue" evidence="2">
    <location>
        <position position="84"/>
    </location>
    <ligand>
        <name>heme b</name>
        <dbReference type="ChEBI" id="CHEBI:60344"/>
        <label>b562</label>
    </ligand>
    <ligandPart>
        <name>Fe</name>
        <dbReference type="ChEBI" id="CHEBI:18248"/>
    </ligandPart>
</feature>
<feature type="binding site" description="axial binding residue" evidence="2">
    <location>
        <position position="98"/>
    </location>
    <ligand>
        <name>heme b</name>
        <dbReference type="ChEBI" id="CHEBI:60344"/>
        <label>b566</label>
    </ligand>
    <ligandPart>
        <name>Fe</name>
        <dbReference type="ChEBI" id="CHEBI:18248"/>
    </ligandPart>
</feature>
<feature type="binding site" description="axial binding residue" evidence="2">
    <location>
        <position position="183"/>
    </location>
    <ligand>
        <name>heme b</name>
        <dbReference type="ChEBI" id="CHEBI:60344"/>
        <label>b562</label>
    </ligand>
    <ligandPart>
        <name>Fe</name>
        <dbReference type="ChEBI" id="CHEBI:18248"/>
    </ligandPart>
</feature>
<feature type="binding site" description="axial binding residue" evidence="2">
    <location>
        <position position="197"/>
    </location>
    <ligand>
        <name>heme b</name>
        <dbReference type="ChEBI" id="CHEBI:60344"/>
        <label>b566</label>
    </ligand>
    <ligandPart>
        <name>Fe</name>
        <dbReference type="ChEBI" id="CHEBI:18248"/>
    </ligandPart>
</feature>
<feature type="binding site" evidence="2">
    <location>
        <position position="202"/>
    </location>
    <ligand>
        <name>a ubiquinone</name>
        <dbReference type="ChEBI" id="CHEBI:16389"/>
    </ligand>
</feature>
<sequence length="380" mass="42493">MALNLRKNHQILKIINDALIDLPTPSNISTWWNFGSLLGICLITQIVTGLLLAMHYTADTNLAFSSVAHMCRDVQFGWLIRNLHANGASFFFICIYLHIGRGLYYGSYLNKETWNIGVILLLTLMATAFVGYVLPWGQMSFWGATVITNLFSAIPYIGQTLVEWAWGGFSVDNPTLTRFFALHFLLPFVIVGLTLVHLTFLHETGSNNPLGIPSDCDKIPFHPYYTIKDILGFVLMLSLLVSLALFSPNLLGDPENFTPANPLVTPPHIKPEWYFLFAYAILRSIPNKLGGVLALAASILVLFLTPLLHTSKLRSMTFRPLSQILFWTLVANVLILTWVGSQPVEHPFIIIGQLASFSYFTIILILFPLAAALENKLLKL</sequence>
<evidence type="ECO:0000250" key="1"/>
<evidence type="ECO:0000250" key="2">
    <source>
        <dbReference type="UniProtKB" id="P00157"/>
    </source>
</evidence>
<evidence type="ECO:0000255" key="3">
    <source>
        <dbReference type="PROSITE-ProRule" id="PRU00967"/>
    </source>
</evidence>
<evidence type="ECO:0000255" key="4">
    <source>
        <dbReference type="PROSITE-ProRule" id="PRU00968"/>
    </source>
</evidence>
<proteinExistence type="inferred from homology"/>
<keyword id="KW-0249">Electron transport</keyword>
<keyword id="KW-0349">Heme</keyword>
<keyword id="KW-0408">Iron</keyword>
<keyword id="KW-0472">Membrane</keyword>
<keyword id="KW-0479">Metal-binding</keyword>
<keyword id="KW-0496">Mitochondrion</keyword>
<keyword id="KW-0999">Mitochondrion inner membrane</keyword>
<keyword id="KW-0679">Respiratory chain</keyword>
<keyword id="KW-0812">Transmembrane</keyword>
<keyword id="KW-1133">Transmembrane helix</keyword>
<keyword id="KW-0813">Transport</keyword>
<keyword id="KW-0830">Ubiquinone</keyword>
<name>CYB_SETPI</name>
<reference key="1">
    <citation type="journal article" date="2002" name="Auk">
        <title>What is a wood-warbler? Molecular characterization of a monophyletic Parulidae.</title>
        <authorList>
            <person name="Lovette I.J."/>
            <person name="Bermingham E."/>
        </authorList>
    </citation>
    <scope>NUCLEOTIDE SEQUENCE [GENOMIC DNA]</scope>
    <source>
        <strain>Isolate USDPI 2933</strain>
    </source>
</reference>
<gene>
    <name type="primary">MT-CYB</name>
    <name type="synonym">COB</name>
    <name type="synonym">CYTB</name>
    <name type="synonym">MTCYB</name>
</gene>
<organism>
    <name type="scientific">Setophaga pinus</name>
    <name type="common">Pine warbler</name>
    <name type="synonym">Dendroica pinus</name>
    <dbReference type="NCBI Taxonomy" id="182907"/>
    <lineage>
        <taxon>Eukaryota</taxon>
        <taxon>Metazoa</taxon>
        <taxon>Chordata</taxon>
        <taxon>Craniata</taxon>
        <taxon>Vertebrata</taxon>
        <taxon>Euteleostomi</taxon>
        <taxon>Archelosauria</taxon>
        <taxon>Archosauria</taxon>
        <taxon>Dinosauria</taxon>
        <taxon>Saurischia</taxon>
        <taxon>Theropoda</taxon>
        <taxon>Coelurosauria</taxon>
        <taxon>Aves</taxon>
        <taxon>Neognathae</taxon>
        <taxon>Neoaves</taxon>
        <taxon>Telluraves</taxon>
        <taxon>Australaves</taxon>
        <taxon>Passeriformes</taxon>
        <taxon>Passeroidea</taxon>
        <taxon>Parulidae</taxon>
        <taxon>Setophaga</taxon>
    </lineage>
</organism>
<dbReference type="EMBL" id="AF383027">
    <property type="protein sequence ID" value="AAM90448.1"/>
    <property type="molecule type" value="Genomic_DNA"/>
</dbReference>
<dbReference type="SMR" id="Q8M4C7"/>
<dbReference type="GO" id="GO:0005743">
    <property type="term" value="C:mitochondrial inner membrane"/>
    <property type="evidence" value="ECO:0007669"/>
    <property type="project" value="UniProtKB-SubCell"/>
</dbReference>
<dbReference type="GO" id="GO:0045275">
    <property type="term" value="C:respiratory chain complex III"/>
    <property type="evidence" value="ECO:0007669"/>
    <property type="project" value="InterPro"/>
</dbReference>
<dbReference type="GO" id="GO:0046872">
    <property type="term" value="F:metal ion binding"/>
    <property type="evidence" value="ECO:0007669"/>
    <property type="project" value="UniProtKB-KW"/>
</dbReference>
<dbReference type="GO" id="GO:0008121">
    <property type="term" value="F:ubiquinol-cytochrome-c reductase activity"/>
    <property type="evidence" value="ECO:0007669"/>
    <property type="project" value="InterPro"/>
</dbReference>
<dbReference type="GO" id="GO:0006122">
    <property type="term" value="P:mitochondrial electron transport, ubiquinol to cytochrome c"/>
    <property type="evidence" value="ECO:0007669"/>
    <property type="project" value="TreeGrafter"/>
</dbReference>
<dbReference type="CDD" id="cd00290">
    <property type="entry name" value="cytochrome_b_C"/>
    <property type="match status" value="1"/>
</dbReference>
<dbReference type="CDD" id="cd00284">
    <property type="entry name" value="Cytochrome_b_N"/>
    <property type="match status" value="1"/>
</dbReference>
<dbReference type="FunFam" id="1.20.810.10:FF:000002">
    <property type="entry name" value="Cytochrome b"/>
    <property type="match status" value="1"/>
</dbReference>
<dbReference type="Gene3D" id="1.20.810.10">
    <property type="entry name" value="Cytochrome Bc1 Complex, Chain C"/>
    <property type="match status" value="1"/>
</dbReference>
<dbReference type="InterPro" id="IPR005798">
    <property type="entry name" value="Cyt_b/b6_C"/>
</dbReference>
<dbReference type="InterPro" id="IPR036150">
    <property type="entry name" value="Cyt_b/b6_C_sf"/>
</dbReference>
<dbReference type="InterPro" id="IPR005797">
    <property type="entry name" value="Cyt_b/b6_N"/>
</dbReference>
<dbReference type="InterPro" id="IPR027387">
    <property type="entry name" value="Cytb/b6-like_sf"/>
</dbReference>
<dbReference type="InterPro" id="IPR030689">
    <property type="entry name" value="Cytochrome_b"/>
</dbReference>
<dbReference type="InterPro" id="IPR048260">
    <property type="entry name" value="Cytochrome_b_C_euk/bac"/>
</dbReference>
<dbReference type="InterPro" id="IPR048259">
    <property type="entry name" value="Cytochrome_b_N_euk/bac"/>
</dbReference>
<dbReference type="InterPro" id="IPR016174">
    <property type="entry name" value="Di-haem_cyt_TM"/>
</dbReference>
<dbReference type="PANTHER" id="PTHR19271">
    <property type="entry name" value="CYTOCHROME B"/>
    <property type="match status" value="1"/>
</dbReference>
<dbReference type="PANTHER" id="PTHR19271:SF16">
    <property type="entry name" value="CYTOCHROME B"/>
    <property type="match status" value="1"/>
</dbReference>
<dbReference type="Pfam" id="PF00032">
    <property type="entry name" value="Cytochrom_B_C"/>
    <property type="match status" value="1"/>
</dbReference>
<dbReference type="Pfam" id="PF00033">
    <property type="entry name" value="Cytochrome_B"/>
    <property type="match status" value="1"/>
</dbReference>
<dbReference type="PIRSF" id="PIRSF038885">
    <property type="entry name" value="COB"/>
    <property type="match status" value="1"/>
</dbReference>
<dbReference type="SUPFAM" id="SSF81648">
    <property type="entry name" value="a domain/subunit of cytochrome bc1 complex (Ubiquinol-cytochrome c reductase)"/>
    <property type="match status" value="1"/>
</dbReference>
<dbReference type="SUPFAM" id="SSF81342">
    <property type="entry name" value="Transmembrane di-heme cytochromes"/>
    <property type="match status" value="1"/>
</dbReference>
<dbReference type="PROSITE" id="PS51003">
    <property type="entry name" value="CYTB_CTER"/>
    <property type="match status" value="1"/>
</dbReference>
<dbReference type="PROSITE" id="PS51002">
    <property type="entry name" value="CYTB_NTER"/>
    <property type="match status" value="1"/>
</dbReference>
<accession>Q8M4C7</accession>